<organism>
    <name type="scientific">Mus musculus</name>
    <name type="common">Mouse</name>
    <dbReference type="NCBI Taxonomy" id="10090"/>
    <lineage>
        <taxon>Eukaryota</taxon>
        <taxon>Metazoa</taxon>
        <taxon>Chordata</taxon>
        <taxon>Craniata</taxon>
        <taxon>Vertebrata</taxon>
        <taxon>Euteleostomi</taxon>
        <taxon>Mammalia</taxon>
        <taxon>Eutheria</taxon>
        <taxon>Euarchontoglires</taxon>
        <taxon>Glires</taxon>
        <taxon>Rodentia</taxon>
        <taxon>Myomorpha</taxon>
        <taxon>Muroidea</taxon>
        <taxon>Muridae</taxon>
        <taxon>Murinae</taxon>
        <taxon>Mus</taxon>
        <taxon>Mus</taxon>
    </lineage>
</organism>
<accession>Q9JHI4</accession>
<accession>Q80YB5</accession>
<accession>Q8R208</accession>
<accession>Q9D2C3</accession>
<feature type="chain" id="PRO_0000172486" description="Solute carrier family 13 member 1">
    <location>
        <begin position="1"/>
        <end position="594"/>
    </location>
</feature>
<feature type="transmembrane region" description="Helical" evidence="2">
    <location>
        <begin position="13"/>
        <end position="33"/>
    </location>
</feature>
<feature type="transmembrane region" description="Helical" evidence="2">
    <location>
        <begin position="40"/>
        <end position="60"/>
    </location>
</feature>
<feature type="transmembrane region" description="Helical" evidence="2">
    <location>
        <begin position="77"/>
        <end position="97"/>
    </location>
</feature>
<feature type="transmembrane region" description="Helical" evidence="2">
    <location>
        <begin position="113"/>
        <end position="133"/>
    </location>
</feature>
<feature type="transmembrane region" description="Helical" evidence="2">
    <location>
        <begin position="134"/>
        <end position="154"/>
    </location>
</feature>
<feature type="transmembrane region" description="Helical" evidence="2">
    <location>
        <begin position="239"/>
        <end position="259"/>
    </location>
</feature>
<feature type="transmembrane region" description="Helical" evidence="2">
    <location>
        <begin position="283"/>
        <end position="303"/>
    </location>
</feature>
<feature type="transmembrane region" description="Helical" evidence="2">
    <location>
        <begin position="347"/>
        <end position="367"/>
    </location>
</feature>
<feature type="transmembrane region" description="Helical" evidence="2">
    <location>
        <begin position="380"/>
        <end position="400"/>
    </location>
</feature>
<feature type="transmembrane region" description="Helical" evidence="2">
    <location>
        <begin position="461"/>
        <end position="481"/>
    </location>
</feature>
<feature type="transmembrane region" description="Helical" evidence="2">
    <location>
        <begin position="487"/>
        <end position="507"/>
    </location>
</feature>
<feature type="transmembrane region" description="Helical" evidence="2">
    <location>
        <begin position="511"/>
        <end position="531"/>
    </location>
</feature>
<feature type="transmembrane region" description="Helical" evidence="2">
    <location>
        <begin position="552"/>
        <end position="572"/>
    </location>
</feature>
<feature type="region of interest" description="Disordered" evidence="3">
    <location>
        <begin position="192"/>
        <end position="226"/>
    </location>
</feature>
<feature type="compositionally biased region" description="Basic and acidic residues" evidence="3">
    <location>
        <begin position="192"/>
        <end position="220"/>
    </location>
</feature>
<feature type="glycosylation site" description="N-linked (GlcNAc...) asparagine" evidence="2">
    <location>
        <position position="174"/>
    </location>
</feature>
<feature type="glycosylation site" description="N-linked (GlcNAc...) asparagine" evidence="2">
    <location>
        <position position="590"/>
    </location>
</feature>
<feature type="splice variant" id="VSP_006121" description="In isoform 2." evidence="5">
    <location>
        <begin position="34"/>
        <end position="76"/>
    </location>
</feature>
<feature type="splice variant" id="VSP_006122" description="In isoform 3." evidence="6">
    <location>
        <begin position="123"/>
        <end position="594"/>
    </location>
</feature>
<feature type="sequence conflict" description="In Ref. 1; AAF64648/AAF64649/AAF65231." evidence="7" ref="1">
    <original>W</original>
    <variation>R</variation>
    <location>
        <position position="470"/>
    </location>
</feature>
<sequence length="594" mass="66084">MKLLNYALVYRRFLLVVFTILVFLPLPLIIRTKEAQCAYILFVIAIFWITEALPLSITALLPGLMFPMFGIMRSSQVASAYFKDFHLLLIGVICLATSIEKWNLHKRIALRMVMMVGVNPAWLTLGFMSSTAFLSMWLSNTSTAAMVMPIVEAVAQQIISAEAEAEATQMTYFNESAAHGLDIDETVIGQETNEKKEKTKPAPGSSHDKGKVSRKMETEKNAVTGAKYRSRKDHMMCKLMCLSVAYSSTIGGLTTITGTSTNLIFSEHFNTRYPDCRCLNFGSWFLFSFPVALILLLLSWIWLQWLYLGFDFKMFKCGKTKTLKEKACAKVIKQEYEKLGPMRYQEIVTLVIFIVMALLWFSRDPGFVTGWSVLFSEYPGYVTDSTVALVAGILFFLIPAKKVTKMTSAGEIIAFDYTPLITWKEFQSFMPWDIAILVGGGFALADGCQVSGLSNWIGSKLSPLGSLPVWLIILISSLIVTSLTEVASNPATITILFPILSPLAEAIQVNPLQILLPSTLCTSFAFLLPVANPPNAIVFSYGHLKVIDMVKAGLGVNILGVAVVMLGMFTWIEPMFNLHEYPSWASNFVNQTMP</sequence>
<keyword id="KW-0025">Alternative splicing</keyword>
<keyword id="KW-1003">Cell membrane</keyword>
<keyword id="KW-0325">Glycoprotein</keyword>
<keyword id="KW-0406">Ion transport</keyword>
<keyword id="KW-0472">Membrane</keyword>
<keyword id="KW-1185">Reference proteome</keyword>
<keyword id="KW-0915">Sodium</keyword>
<keyword id="KW-0739">Sodium transport</keyword>
<keyword id="KW-0764">Sulfate transport</keyword>
<keyword id="KW-0769">Symport</keyword>
<keyword id="KW-0812">Transmembrane</keyword>
<keyword id="KW-1133">Transmembrane helix</keyword>
<keyword id="KW-0813">Transport</keyword>
<dbReference type="EMBL" id="AF199365">
    <property type="protein sequence ID" value="AAF64648.1"/>
    <property type="molecule type" value="mRNA"/>
</dbReference>
<dbReference type="EMBL" id="AF199366">
    <property type="protein sequence ID" value="AAF64649.1"/>
    <property type="molecule type" value="mRNA"/>
</dbReference>
<dbReference type="EMBL" id="AF200319">
    <property type="protein sequence ID" value="AAF65231.1"/>
    <property type="molecule type" value="Genomic_DNA"/>
</dbReference>
<dbReference type="EMBL" id="AF200305">
    <property type="protein sequence ID" value="AAF65231.1"/>
    <property type="status" value="JOINED"/>
    <property type="molecule type" value="Genomic_DNA"/>
</dbReference>
<dbReference type="EMBL" id="AF200306">
    <property type="protein sequence ID" value="AAF65231.1"/>
    <property type="status" value="JOINED"/>
    <property type="molecule type" value="Genomic_DNA"/>
</dbReference>
<dbReference type="EMBL" id="AF200307">
    <property type="protein sequence ID" value="AAF65231.1"/>
    <property type="status" value="JOINED"/>
    <property type="molecule type" value="Genomic_DNA"/>
</dbReference>
<dbReference type="EMBL" id="AF200308">
    <property type="protein sequence ID" value="AAF65231.1"/>
    <property type="status" value="JOINED"/>
    <property type="molecule type" value="Genomic_DNA"/>
</dbReference>
<dbReference type="EMBL" id="AF200309">
    <property type="protein sequence ID" value="AAF65231.1"/>
    <property type="status" value="JOINED"/>
    <property type="molecule type" value="Genomic_DNA"/>
</dbReference>
<dbReference type="EMBL" id="AF200310">
    <property type="protein sequence ID" value="AAF65231.1"/>
    <property type="status" value="JOINED"/>
    <property type="molecule type" value="Genomic_DNA"/>
</dbReference>
<dbReference type="EMBL" id="AF200311">
    <property type="protein sequence ID" value="AAF65231.1"/>
    <property type="status" value="JOINED"/>
    <property type="molecule type" value="Genomic_DNA"/>
</dbReference>
<dbReference type="EMBL" id="AF200312">
    <property type="protein sequence ID" value="AAF65231.1"/>
    <property type="status" value="JOINED"/>
    <property type="molecule type" value="Genomic_DNA"/>
</dbReference>
<dbReference type="EMBL" id="AF200313">
    <property type="protein sequence ID" value="AAF65231.1"/>
    <property type="status" value="JOINED"/>
    <property type="molecule type" value="Genomic_DNA"/>
</dbReference>
<dbReference type="EMBL" id="AF200314">
    <property type="protein sequence ID" value="AAF65231.1"/>
    <property type="status" value="JOINED"/>
    <property type="molecule type" value="Genomic_DNA"/>
</dbReference>
<dbReference type="EMBL" id="AF200315">
    <property type="protein sequence ID" value="AAF65231.1"/>
    <property type="status" value="JOINED"/>
    <property type="molecule type" value="Genomic_DNA"/>
</dbReference>
<dbReference type="EMBL" id="AF200316">
    <property type="protein sequence ID" value="AAF65231.1"/>
    <property type="status" value="JOINED"/>
    <property type="molecule type" value="Genomic_DNA"/>
</dbReference>
<dbReference type="EMBL" id="AF200317">
    <property type="protein sequence ID" value="AAF65231.1"/>
    <property type="status" value="JOINED"/>
    <property type="molecule type" value="Genomic_DNA"/>
</dbReference>
<dbReference type="EMBL" id="AF200318">
    <property type="protein sequence ID" value="AAF65231.1"/>
    <property type="status" value="JOINED"/>
    <property type="molecule type" value="Genomic_DNA"/>
</dbReference>
<dbReference type="EMBL" id="AK019876">
    <property type="status" value="NOT_ANNOTATED_CDS"/>
    <property type="molecule type" value="mRNA"/>
</dbReference>
<dbReference type="EMBL" id="CH466533">
    <property type="protein sequence ID" value="EDL13827.1"/>
    <property type="molecule type" value="Genomic_DNA"/>
</dbReference>
<dbReference type="EMBL" id="BC049981">
    <property type="protein sequence ID" value="AAH49981.1"/>
    <property type="molecule type" value="mRNA"/>
</dbReference>
<dbReference type="EMBL" id="BC022672">
    <property type="protein sequence ID" value="AAH22672.1"/>
    <property type="molecule type" value="mRNA"/>
</dbReference>
<dbReference type="CCDS" id="CCDS19940.1">
    <molecule id="Q9JHI4-1"/>
</dbReference>
<dbReference type="RefSeq" id="NP_062354.2">
    <molecule id="Q9JHI4-1"/>
    <property type="nucleotide sequence ID" value="NM_019481.2"/>
</dbReference>
<dbReference type="SMR" id="Q9JHI4"/>
<dbReference type="FunCoup" id="Q9JHI4">
    <property type="interactions" value="292"/>
</dbReference>
<dbReference type="STRING" id="10090.ENSMUSP00000031713"/>
<dbReference type="GlyCosmos" id="Q9JHI4">
    <property type="glycosylation" value="2 sites, No reported glycans"/>
</dbReference>
<dbReference type="GlyGen" id="Q9JHI4">
    <property type="glycosylation" value="2 sites"/>
</dbReference>
<dbReference type="iPTMnet" id="Q9JHI4"/>
<dbReference type="PhosphoSitePlus" id="Q9JHI4"/>
<dbReference type="SwissPalm" id="Q9JHI4"/>
<dbReference type="PaxDb" id="10090-ENSMUSP00000031713"/>
<dbReference type="ProteomicsDB" id="253346">
    <molecule id="Q9JHI4-1"/>
</dbReference>
<dbReference type="ProteomicsDB" id="253347">
    <molecule id="Q9JHI4-2"/>
</dbReference>
<dbReference type="ProteomicsDB" id="253348">
    <molecule id="Q9JHI4-3"/>
</dbReference>
<dbReference type="Antibodypedia" id="62232">
    <property type="antibodies" value="27 antibodies from 12 providers"/>
</dbReference>
<dbReference type="DNASU" id="55961"/>
<dbReference type="Ensembl" id="ENSMUST00000031713.9">
    <molecule id="Q9JHI4-1"/>
    <property type="protein sequence ID" value="ENSMUSP00000031713.8"/>
    <property type="gene ID" value="ENSMUSG00000029700.12"/>
</dbReference>
<dbReference type="GeneID" id="55961"/>
<dbReference type="KEGG" id="mmu:55961"/>
<dbReference type="UCSC" id="uc009bbo.2">
    <molecule id="Q9JHI4-1"/>
    <property type="organism name" value="mouse"/>
</dbReference>
<dbReference type="UCSC" id="uc009bbq.1">
    <molecule id="Q9JHI4-3"/>
    <property type="organism name" value="mouse"/>
</dbReference>
<dbReference type="AGR" id="MGI:1859937"/>
<dbReference type="CTD" id="6561"/>
<dbReference type="MGI" id="MGI:1859937">
    <property type="gene designation" value="Slc13a1"/>
</dbReference>
<dbReference type="VEuPathDB" id="HostDB:ENSMUSG00000029700"/>
<dbReference type="eggNOG" id="KOG1281">
    <property type="taxonomic scope" value="Eukaryota"/>
</dbReference>
<dbReference type="GeneTree" id="ENSGT01030000234550"/>
<dbReference type="HOGENOM" id="CLU_005170_9_1_1"/>
<dbReference type="InParanoid" id="Q9JHI4"/>
<dbReference type="OMA" id="THIMAHT"/>
<dbReference type="OrthoDB" id="6493944at2759"/>
<dbReference type="PhylomeDB" id="Q9JHI4"/>
<dbReference type="TreeFam" id="TF312913"/>
<dbReference type="Reactome" id="R-MMU-433137">
    <property type="pathway name" value="Sodium-coupled sulphate, di- and tri-carboxylate transporters"/>
</dbReference>
<dbReference type="BioGRID-ORCS" id="55961">
    <property type="hits" value="1 hit in 77 CRISPR screens"/>
</dbReference>
<dbReference type="ChiTaRS" id="Slc13a1">
    <property type="organism name" value="mouse"/>
</dbReference>
<dbReference type="PRO" id="PR:Q9JHI4"/>
<dbReference type="Proteomes" id="UP000000589">
    <property type="component" value="Chromosome 6"/>
</dbReference>
<dbReference type="RNAct" id="Q9JHI4">
    <property type="molecule type" value="protein"/>
</dbReference>
<dbReference type="Bgee" id="ENSMUSG00000029700">
    <property type="expression patterns" value="Expressed in right kidney and 79 other cell types or tissues"/>
</dbReference>
<dbReference type="GO" id="GO:0016324">
    <property type="term" value="C:apical plasma membrane"/>
    <property type="evidence" value="ECO:0007669"/>
    <property type="project" value="UniProtKB-SubCell"/>
</dbReference>
<dbReference type="GO" id="GO:0005886">
    <property type="term" value="C:plasma membrane"/>
    <property type="evidence" value="ECO:0000250"/>
    <property type="project" value="MGI"/>
</dbReference>
<dbReference type="GO" id="GO:0015373">
    <property type="term" value="F:monoatomic anion:sodium symporter activity"/>
    <property type="evidence" value="ECO:0007669"/>
    <property type="project" value="Ensembl"/>
</dbReference>
<dbReference type="GO" id="GO:0008271">
    <property type="term" value="F:secondary active sulfate transmembrane transporter activity"/>
    <property type="evidence" value="ECO:0000314"/>
    <property type="project" value="MGI"/>
</dbReference>
<dbReference type="GO" id="GO:0015382">
    <property type="term" value="F:sodium:sulfate symporter activity"/>
    <property type="evidence" value="ECO:0000314"/>
    <property type="project" value="UniProtKB"/>
</dbReference>
<dbReference type="GO" id="GO:1902358">
    <property type="term" value="P:sulfate transmembrane transport"/>
    <property type="evidence" value="ECO:0000314"/>
    <property type="project" value="MGI"/>
</dbReference>
<dbReference type="InterPro" id="IPR031312">
    <property type="entry name" value="Na/sul_symport_CS"/>
</dbReference>
<dbReference type="InterPro" id="IPR001898">
    <property type="entry name" value="SLC13A/DASS"/>
</dbReference>
<dbReference type="PANTHER" id="PTHR10283">
    <property type="entry name" value="SOLUTE CARRIER FAMILY 13 MEMBER"/>
    <property type="match status" value="1"/>
</dbReference>
<dbReference type="PANTHER" id="PTHR10283:SF65">
    <property type="entry name" value="SOLUTE CARRIER FAMILY 13 MEMBER 1"/>
    <property type="match status" value="1"/>
</dbReference>
<dbReference type="Pfam" id="PF00939">
    <property type="entry name" value="Na_sulph_symp"/>
    <property type="match status" value="1"/>
</dbReference>
<dbReference type="PROSITE" id="PS01271">
    <property type="entry name" value="NA_SULFATE"/>
    <property type="match status" value="1"/>
</dbReference>
<proteinExistence type="evidence at protein level"/>
<comment type="function">
    <text evidence="1 4">Sodium:sulfate symporter that mediates sulfate reabsorption in the kidney and small intestine (PubMed:10766815). Can also mediate the transport of selenate and thiosulfate (By similarity).</text>
</comment>
<comment type="catalytic activity">
    <reaction evidence="4">
        <text>sulfate(out) + 3 Na(+)(out) = sulfate(in) + 3 Na(+)(in)</text>
        <dbReference type="Rhea" id="RHEA:71951"/>
        <dbReference type="ChEBI" id="CHEBI:16189"/>
        <dbReference type="ChEBI" id="CHEBI:29101"/>
    </reaction>
</comment>
<comment type="catalytic activity">
    <reaction evidence="1">
        <text>selenate(out) + 3 Na(+)(out) = selenate(in) + 3 Na(+)(in)</text>
        <dbReference type="Rhea" id="RHEA:72079"/>
        <dbReference type="ChEBI" id="CHEBI:15075"/>
        <dbReference type="ChEBI" id="CHEBI:29101"/>
    </reaction>
</comment>
<comment type="catalytic activity">
    <reaction evidence="1">
        <text>thiosulfate(out) + 3 Na(+)(out) = thiosulfate(in) + 3 Na(+)(in)</text>
        <dbReference type="Rhea" id="RHEA:72323"/>
        <dbReference type="ChEBI" id="CHEBI:29101"/>
        <dbReference type="ChEBI" id="CHEBI:33542"/>
    </reaction>
</comment>
<comment type="biophysicochemical properties">
    <kinetics>
        <KM evidence="4">0.2 mM for sulfate</KM>
    </kinetics>
</comment>
<comment type="subcellular location">
    <subcellularLocation>
        <location evidence="1">Apical cell membrane</location>
        <topology evidence="2">Multi-pass membrane protein</topology>
    </subcellularLocation>
</comment>
<comment type="alternative products">
    <event type="alternative splicing"/>
    <isoform>
        <id>Q9JHI4-1</id>
        <name>1</name>
        <sequence type="displayed"/>
    </isoform>
    <isoform>
        <id>Q9JHI4-2</id>
        <name>2</name>
        <sequence type="described" ref="VSP_006121"/>
    </isoform>
    <isoform>
        <id>Q9JHI4-3</id>
        <name>3</name>
        <sequence type="described" ref="VSP_006122"/>
    </isoform>
    <text>Experimental confirmation may be lacking for some isoforms.</text>
</comment>
<comment type="tissue specificity">
    <molecule>Isoform 1</molecule>
    <text evidence="4">Highly expressed in kidney and ileum, detected at lower levels in duodenum/jejunum and colon, and at very low levels in cecum, testis, adrenal and adipose tissues.</text>
</comment>
<comment type="tissue specificity">
    <molecule>Isoform 2</molecule>
    <text evidence="4">Expressed in the kidney.</text>
</comment>
<comment type="similarity">
    <text evidence="7">Belongs to the SLC13A/DASS transporter (TC 2.A.47) family. NADC subfamily.</text>
</comment>
<comment type="sequence caution" evidence="7">
    <conflict type="frameshift">
        <sequence resource="EMBL" id="AK019876"/>
    </conflict>
</comment>
<reference key="1">
    <citation type="journal article" date="2000" name="J. Biol. Chem.">
        <title>The mouse Na+-sulfate cotransporter gene Nas1: cloning, tissue distribution, gene structure, chromosomal assignment, and transcriptional regulation by vitamin D.</title>
        <authorList>
            <person name="Beck L."/>
            <person name="Markovich D."/>
        </authorList>
    </citation>
    <scope>NUCLEOTIDE SEQUENCE [GENOMIC DNA / MRNA] (ISOFORMS 1 AND 2)</scope>
    <scope>FUNCTION</scope>
    <scope>TRANSPORTER ACTIVITY</scope>
    <scope>BIOPHYSICOCHEMICAL PROPERTIES</scope>
    <scope>TISSUE SPECIFICITY</scope>
    <source>
        <strain>129/Sv</strain>
        <tissue>Kidney</tissue>
    </source>
</reference>
<reference key="2">
    <citation type="journal article" date="2005" name="Science">
        <title>The transcriptional landscape of the mammalian genome.</title>
        <authorList>
            <person name="Carninci P."/>
            <person name="Kasukawa T."/>
            <person name="Katayama S."/>
            <person name="Gough J."/>
            <person name="Frith M.C."/>
            <person name="Maeda N."/>
            <person name="Oyama R."/>
            <person name="Ravasi T."/>
            <person name="Lenhard B."/>
            <person name="Wells C."/>
            <person name="Kodzius R."/>
            <person name="Shimokawa K."/>
            <person name="Bajic V.B."/>
            <person name="Brenner S.E."/>
            <person name="Batalov S."/>
            <person name="Forrest A.R."/>
            <person name="Zavolan M."/>
            <person name="Davis M.J."/>
            <person name="Wilming L.G."/>
            <person name="Aidinis V."/>
            <person name="Allen J.E."/>
            <person name="Ambesi-Impiombato A."/>
            <person name="Apweiler R."/>
            <person name="Aturaliya R.N."/>
            <person name="Bailey T.L."/>
            <person name="Bansal M."/>
            <person name="Baxter L."/>
            <person name="Beisel K.W."/>
            <person name="Bersano T."/>
            <person name="Bono H."/>
            <person name="Chalk A.M."/>
            <person name="Chiu K.P."/>
            <person name="Choudhary V."/>
            <person name="Christoffels A."/>
            <person name="Clutterbuck D.R."/>
            <person name="Crowe M.L."/>
            <person name="Dalla E."/>
            <person name="Dalrymple B.P."/>
            <person name="de Bono B."/>
            <person name="Della Gatta G."/>
            <person name="di Bernardo D."/>
            <person name="Down T."/>
            <person name="Engstrom P."/>
            <person name="Fagiolini M."/>
            <person name="Faulkner G."/>
            <person name="Fletcher C.F."/>
            <person name="Fukushima T."/>
            <person name="Furuno M."/>
            <person name="Futaki S."/>
            <person name="Gariboldi M."/>
            <person name="Georgii-Hemming P."/>
            <person name="Gingeras T.R."/>
            <person name="Gojobori T."/>
            <person name="Green R.E."/>
            <person name="Gustincich S."/>
            <person name="Harbers M."/>
            <person name="Hayashi Y."/>
            <person name="Hensch T.K."/>
            <person name="Hirokawa N."/>
            <person name="Hill D."/>
            <person name="Huminiecki L."/>
            <person name="Iacono M."/>
            <person name="Ikeo K."/>
            <person name="Iwama A."/>
            <person name="Ishikawa T."/>
            <person name="Jakt M."/>
            <person name="Kanapin A."/>
            <person name="Katoh M."/>
            <person name="Kawasawa Y."/>
            <person name="Kelso J."/>
            <person name="Kitamura H."/>
            <person name="Kitano H."/>
            <person name="Kollias G."/>
            <person name="Krishnan S.P."/>
            <person name="Kruger A."/>
            <person name="Kummerfeld S.K."/>
            <person name="Kurochkin I.V."/>
            <person name="Lareau L.F."/>
            <person name="Lazarevic D."/>
            <person name="Lipovich L."/>
            <person name="Liu J."/>
            <person name="Liuni S."/>
            <person name="McWilliam S."/>
            <person name="Madan Babu M."/>
            <person name="Madera M."/>
            <person name="Marchionni L."/>
            <person name="Matsuda H."/>
            <person name="Matsuzawa S."/>
            <person name="Miki H."/>
            <person name="Mignone F."/>
            <person name="Miyake S."/>
            <person name="Morris K."/>
            <person name="Mottagui-Tabar S."/>
            <person name="Mulder N."/>
            <person name="Nakano N."/>
            <person name="Nakauchi H."/>
            <person name="Ng P."/>
            <person name="Nilsson R."/>
            <person name="Nishiguchi S."/>
            <person name="Nishikawa S."/>
            <person name="Nori F."/>
            <person name="Ohara O."/>
            <person name="Okazaki Y."/>
            <person name="Orlando V."/>
            <person name="Pang K.C."/>
            <person name="Pavan W.J."/>
            <person name="Pavesi G."/>
            <person name="Pesole G."/>
            <person name="Petrovsky N."/>
            <person name="Piazza S."/>
            <person name="Reed J."/>
            <person name="Reid J.F."/>
            <person name="Ring B.Z."/>
            <person name="Ringwald M."/>
            <person name="Rost B."/>
            <person name="Ruan Y."/>
            <person name="Salzberg S.L."/>
            <person name="Sandelin A."/>
            <person name="Schneider C."/>
            <person name="Schoenbach C."/>
            <person name="Sekiguchi K."/>
            <person name="Semple C.A."/>
            <person name="Seno S."/>
            <person name="Sessa L."/>
            <person name="Sheng Y."/>
            <person name="Shibata Y."/>
            <person name="Shimada H."/>
            <person name="Shimada K."/>
            <person name="Silva D."/>
            <person name="Sinclair B."/>
            <person name="Sperling S."/>
            <person name="Stupka E."/>
            <person name="Sugiura K."/>
            <person name="Sultana R."/>
            <person name="Takenaka Y."/>
            <person name="Taki K."/>
            <person name="Tammoja K."/>
            <person name="Tan S.L."/>
            <person name="Tang S."/>
            <person name="Taylor M.S."/>
            <person name="Tegner J."/>
            <person name="Teichmann S.A."/>
            <person name="Ueda H.R."/>
            <person name="van Nimwegen E."/>
            <person name="Verardo R."/>
            <person name="Wei C.L."/>
            <person name="Yagi K."/>
            <person name="Yamanishi H."/>
            <person name="Zabarovsky E."/>
            <person name="Zhu S."/>
            <person name="Zimmer A."/>
            <person name="Hide W."/>
            <person name="Bult C."/>
            <person name="Grimmond S.M."/>
            <person name="Teasdale R.D."/>
            <person name="Liu E.T."/>
            <person name="Brusic V."/>
            <person name="Quackenbush J."/>
            <person name="Wahlestedt C."/>
            <person name="Mattick J.S."/>
            <person name="Hume D.A."/>
            <person name="Kai C."/>
            <person name="Sasaki D."/>
            <person name="Tomaru Y."/>
            <person name="Fukuda S."/>
            <person name="Kanamori-Katayama M."/>
            <person name="Suzuki M."/>
            <person name="Aoki J."/>
            <person name="Arakawa T."/>
            <person name="Iida J."/>
            <person name="Imamura K."/>
            <person name="Itoh M."/>
            <person name="Kato T."/>
            <person name="Kawaji H."/>
            <person name="Kawagashira N."/>
            <person name="Kawashima T."/>
            <person name="Kojima M."/>
            <person name="Kondo S."/>
            <person name="Konno H."/>
            <person name="Nakano K."/>
            <person name="Ninomiya N."/>
            <person name="Nishio T."/>
            <person name="Okada M."/>
            <person name="Plessy C."/>
            <person name="Shibata K."/>
            <person name="Shiraki T."/>
            <person name="Suzuki S."/>
            <person name="Tagami M."/>
            <person name="Waki K."/>
            <person name="Watahiki A."/>
            <person name="Okamura-Oho Y."/>
            <person name="Suzuki H."/>
            <person name="Kawai J."/>
            <person name="Hayashizaki Y."/>
        </authorList>
    </citation>
    <scope>NUCLEOTIDE SEQUENCE [LARGE SCALE MRNA] (ISOFORM 3)</scope>
    <source>
        <strain>C57BL/6J</strain>
        <tissue>Ovary</tissue>
        <tissue>Uterus</tissue>
    </source>
</reference>
<reference key="3">
    <citation type="submission" date="2005-09" db="EMBL/GenBank/DDBJ databases">
        <authorList>
            <person name="Mural R.J."/>
            <person name="Adams M.D."/>
            <person name="Myers E.W."/>
            <person name="Smith H.O."/>
            <person name="Venter J.C."/>
        </authorList>
    </citation>
    <scope>NUCLEOTIDE SEQUENCE [LARGE SCALE GENOMIC DNA]</scope>
</reference>
<reference key="4">
    <citation type="journal article" date="2004" name="Genome Res.">
        <title>The status, quality, and expansion of the NIH full-length cDNA project: the Mammalian Gene Collection (MGC).</title>
        <authorList>
            <consortium name="The MGC Project Team"/>
        </authorList>
    </citation>
    <scope>NUCLEOTIDE SEQUENCE [LARGE SCALE MRNA] (ISOFORM 1)</scope>
    <source>
        <strain>FVB/N</strain>
        <tissue>Kidney</tissue>
    </source>
</reference>
<protein>
    <recommendedName>
        <fullName>Solute carrier family 13 member 1</fullName>
    </recommendedName>
    <alternativeName>
        <fullName>NaSi-1</fullName>
    </alternativeName>
    <alternativeName>
        <fullName>Renal sodium/sulfate cotransporter</fullName>
        <shortName>Na(+)/sulfate cotransporter</shortName>
    </alternativeName>
</protein>
<evidence type="ECO:0000250" key="1">
    <source>
        <dbReference type="UniProtKB" id="Q07782"/>
    </source>
</evidence>
<evidence type="ECO:0000255" key="2"/>
<evidence type="ECO:0000256" key="3">
    <source>
        <dbReference type="SAM" id="MobiDB-lite"/>
    </source>
</evidence>
<evidence type="ECO:0000269" key="4">
    <source>
    </source>
</evidence>
<evidence type="ECO:0000303" key="5">
    <source>
    </source>
</evidence>
<evidence type="ECO:0000303" key="6">
    <source>
    </source>
</evidence>
<evidence type="ECO:0000305" key="7"/>
<gene>
    <name type="primary">Slc13a1</name>
    <name type="synonym">Nas1</name>
    <name type="synonym">Nasi1</name>
</gene>
<name>S13A1_MOUSE</name>